<gene>
    <name evidence="1" type="primary">tatC</name>
</gene>
<comment type="function">
    <text evidence="1">Part of the twin-arginine translocation (Tat) system that transports large folded proteins containing a characteristic twin-arginine motif in their signal peptide across membranes. Together with TatB, TatC is part of a receptor directly interacting with Tat signal peptides.</text>
</comment>
<comment type="subunit">
    <text evidence="1">The Tat system comprises two distinct complexes: a TatABC complex, containing multiple copies of TatA, TatB and TatC subunits, and a separate TatA complex, containing only TatA subunits. Substrates initially bind to the TatABC complex, which probably triggers association of the separate TatA complex to form the active translocon.</text>
</comment>
<comment type="subcellular location">
    <subcellularLocation>
        <location evidence="1">Cell membrane</location>
        <topology evidence="1">Multi-pass membrane protein</topology>
    </subcellularLocation>
</comment>
<comment type="similarity">
    <text evidence="1">Belongs to the TatC family.</text>
</comment>
<evidence type="ECO:0000255" key="1">
    <source>
        <dbReference type="HAMAP-Rule" id="MF_00902"/>
    </source>
</evidence>
<proteinExistence type="inferred from homology"/>
<dbReference type="EMBL" id="U48404">
    <property type="protein sequence ID" value="AAA92109.2"/>
    <property type="molecule type" value="Genomic_DNA"/>
</dbReference>
<dbReference type="SMR" id="P54085"/>
<dbReference type="GO" id="GO:0033281">
    <property type="term" value="C:TAT protein transport complex"/>
    <property type="evidence" value="ECO:0007669"/>
    <property type="project" value="UniProtKB-UniRule"/>
</dbReference>
<dbReference type="GO" id="GO:0009977">
    <property type="term" value="F:proton motive force dependent protein transmembrane transporter activity"/>
    <property type="evidence" value="ECO:0007669"/>
    <property type="project" value="TreeGrafter"/>
</dbReference>
<dbReference type="GO" id="GO:0065002">
    <property type="term" value="P:intracellular protein transmembrane transport"/>
    <property type="evidence" value="ECO:0007669"/>
    <property type="project" value="TreeGrafter"/>
</dbReference>
<dbReference type="GO" id="GO:0043953">
    <property type="term" value="P:protein transport by the Tat complex"/>
    <property type="evidence" value="ECO:0007669"/>
    <property type="project" value="UniProtKB-UniRule"/>
</dbReference>
<dbReference type="HAMAP" id="MF_00902">
    <property type="entry name" value="TatC"/>
    <property type="match status" value="1"/>
</dbReference>
<dbReference type="InterPro" id="IPR019820">
    <property type="entry name" value="Sec-indep_translocase_CS"/>
</dbReference>
<dbReference type="InterPro" id="IPR002033">
    <property type="entry name" value="TatC"/>
</dbReference>
<dbReference type="NCBIfam" id="TIGR00945">
    <property type="entry name" value="tatC"/>
    <property type="match status" value="1"/>
</dbReference>
<dbReference type="PANTHER" id="PTHR30371">
    <property type="entry name" value="SEC-INDEPENDENT PROTEIN TRANSLOCASE PROTEIN TATC"/>
    <property type="match status" value="1"/>
</dbReference>
<dbReference type="PANTHER" id="PTHR30371:SF0">
    <property type="entry name" value="SEC-INDEPENDENT PROTEIN TRANSLOCASE PROTEIN TATC, CHLOROPLASTIC-RELATED"/>
    <property type="match status" value="1"/>
</dbReference>
<dbReference type="Pfam" id="PF00902">
    <property type="entry name" value="TatC"/>
    <property type="match status" value="1"/>
</dbReference>
<dbReference type="PRINTS" id="PR01840">
    <property type="entry name" value="TATCFAMILY"/>
</dbReference>
<dbReference type="PROSITE" id="PS01218">
    <property type="entry name" value="TATC"/>
    <property type="match status" value="1"/>
</dbReference>
<protein>
    <recommendedName>
        <fullName evidence="1">Sec-independent protein translocase protein TatC</fullName>
    </recommendedName>
</protein>
<reference key="1">
    <citation type="submission" date="1996-03" db="EMBL/GenBank/DDBJ databases">
        <authorList>
            <person name="Yates M."/>
            <person name="Souza E.M."/>
        </authorList>
    </citation>
    <scope>NUCLEOTIDE SEQUENCE [GENOMIC DNA]</scope>
</reference>
<keyword id="KW-1003">Cell membrane</keyword>
<keyword id="KW-0472">Membrane</keyword>
<keyword id="KW-0653">Protein transport</keyword>
<keyword id="KW-0811">Translocation</keyword>
<keyword id="KW-0812">Transmembrane</keyword>
<keyword id="KW-1133">Transmembrane helix</keyword>
<keyword id="KW-0813">Transport</keyword>
<feature type="chain" id="PRO_0000098081" description="Sec-independent protein translocase protein TatC">
    <location>
        <begin position="1"/>
        <end position="255"/>
    </location>
</feature>
<feature type="transmembrane region" description="Helical" evidence="1">
    <location>
        <begin position="28"/>
        <end position="48"/>
    </location>
</feature>
<feature type="transmembrane region" description="Helical" evidence="1">
    <location>
        <begin position="56"/>
        <end position="76"/>
    </location>
</feature>
<feature type="transmembrane region" description="Helical" evidence="1">
    <location>
        <begin position="80"/>
        <end position="100"/>
    </location>
</feature>
<feature type="transmembrane region" description="Helical" evidence="1">
    <location>
        <begin position="121"/>
        <end position="141"/>
    </location>
</feature>
<feature type="transmembrane region" description="Helical" evidence="1">
    <location>
        <begin position="165"/>
        <end position="185"/>
    </location>
</feature>
<feature type="transmembrane region" description="Helical" evidence="1">
    <location>
        <begin position="195"/>
        <end position="212"/>
    </location>
</feature>
<feature type="transmembrane region" description="Helical" evidence="1">
    <location>
        <begin position="216"/>
        <end position="236"/>
    </location>
</feature>
<organism>
    <name type="scientific">Azotobacter chroococcum mcd 1</name>
    <dbReference type="NCBI Taxonomy" id="355"/>
    <lineage>
        <taxon>Bacteria</taxon>
        <taxon>Pseudomonadati</taxon>
        <taxon>Pseudomonadota</taxon>
        <taxon>Gammaproteobacteria</taxon>
        <taxon>Pseudomonadales</taxon>
        <taxon>Pseudomonadaceae</taxon>
        <taxon>Azotobacter</taxon>
    </lineage>
</organism>
<accession>P54085</accession>
<sequence length="255" mass="28076">MTARPDSDQDMPLVAHLTELRSRLLRSVAAVLLIFAALFYFAQDIYALVSAPLRAYLPEGATMIATGVASPFLAPFKLTLMISLFLAMPVVLHQVWGFIAPGLYQHEKRIAMPLMASSVLLFYAGMAFAYFVVFPIMFGFFASVTPEGVAMMTDIGQYLDFVLTLFFAFGVAFEVPVATFLLIWVGIVDVASLRNSRPYVIVGCFVVGMVLTPPDVFSQTLLAVPMWLLFEIGVFFGARIRHREEPAASDGPSQP</sequence>
<name>TATC_AZOCH</name>